<accession>O85274</accession>
<gene>
    <name evidence="2" type="primary">nuoB</name>
</gene>
<protein>
    <recommendedName>
        <fullName evidence="2">NADH-quinone oxidoreductase subunit B</fullName>
        <ecNumber evidence="2">7.1.1.-</ecNumber>
    </recommendedName>
    <alternativeName>
        <fullName evidence="2">NADH dehydrogenase I subunit B</fullName>
    </alternativeName>
    <alternativeName>
        <fullName evidence="2">NDH-1 subunit B</fullName>
    </alternativeName>
</protein>
<sequence length="224" mass="25606">MDYTLTRIEPDGENDRYPLQRQEIVSDPLEQHVHRSVYMGKLEHALHDTVNWGRQNSLWPYNFGLSCCYVEMVTSFTAVHDVARFGAEVLRASPRQADFMVVAGTCFTKMAPVIQRLYEQMLEPKWVISMGACANSGGMYDIYSVVQGVDKFLPVDVYIPGCPPRPEAYMQALLLLKESIGKERRPLSWVVGEQGVYRANMQSERERKRGERIAVTNLRSPDEI</sequence>
<proteinExistence type="inferred from homology"/>
<feature type="chain" id="PRO_0000118772" description="NADH-quinone oxidoreductase subunit B">
    <location>
        <begin position="1"/>
        <end position="224"/>
    </location>
</feature>
<feature type="binding site" evidence="2">
    <location>
        <position position="67"/>
    </location>
    <ligand>
        <name>[4Fe-4S] cluster</name>
        <dbReference type="ChEBI" id="CHEBI:49883"/>
    </ligand>
</feature>
<feature type="binding site" evidence="2">
    <location>
        <position position="68"/>
    </location>
    <ligand>
        <name>[4Fe-4S] cluster</name>
        <dbReference type="ChEBI" id="CHEBI:49883"/>
    </ligand>
</feature>
<feature type="binding site" evidence="2">
    <location>
        <position position="133"/>
    </location>
    <ligand>
        <name>[4Fe-4S] cluster</name>
        <dbReference type="ChEBI" id="CHEBI:49883"/>
    </ligand>
</feature>
<feature type="binding site" evidence="2">
    <location>
        <position position="162"/>
    </location>
    <ligand>
        <name>[4Fe-4S] cluster</name>
        <dbReference type="ChEBI" id="CHEBI:49883"/>
    </ligand>
</feature>
<organism>
    <name type="scientific">Pectobacterium carotovorum subsp. carotovorum</name>
    <name type="common">Erwinia carotovora subsp. carotovora</name>
    <dbReference type="NCBI Taxonomy" id="555"/>
    <lineage>
        <taxon>Bacteria</taxon>
        <taxon>Pseudomonadati</taxon>
        <taxon>Pseudomonadota</taxon>
        <taxon>Gammaproteobacteria</taxon>
        <taxon>Enterobacterales</taxon>
        <taxon>Pectobacteriaceae</taxon>
        <taxon>Pectobacterium</taxon>
    </lineage>
</organism>
<reference key="1">
    <citation type="journal article" date="1998" name="Mol. Microbiol.">
        <title>The hexA gene of Erwinia carotovora encodes a LysR homologue and regulates motility and the expression of multiple virulence determinants.</title>
        <authorList>
            <person name="Harris S.J."/>
            <person name="Shih Y.L."/>
            <person name="Bentley S.D."/>
            <person name="Salmond G.P.C."/>
        </authorList>
    </citation>
    <scope>NUCLEOTIDE SEQUENCE [GENOMIC DNA]</scope>
    <source>
        <strain>SCRI 193</strain>
    </source>
</reference>
<name>NUOB_PECCC</name>
<evidence type="ECO:0000250" key="1"/>
<evidence type="ECO:0000255" key="2">
    <source>
        <dbReference type="HAMAP-Rule" id="MF_01356"/>
    </source>
</evidence>
<keyword id="KW-0004">4Fe-4S</keyword>
<keyword id="KW-0997">Cell inner membrane</keyword>
<keyword id="KW-1003">Cell membrane</keyword>
<keyword id="KW-0408">Iron</keyword>
<keyword id="KW-0411">Iron-sulfur</keyword>
<keyword id="KW-0472">Membrane</keyword>
<keyword id="KW-0479">Metal-binding</keyword>
<keyword id="KW-0520">NAD</keyword>
<keyword id="KW-0874">Quinone</keyword>
<keyword id="KW-1278">Translocase</keyword>
<keyword id="KW-0813">Transport</keyword>
<keyword id="KW-0830">Ubiquinone</keyword>
<dbReference type="EC" id="7.1.1.-" evidence="2"/>
<dbReference type="EMBL" id="AF057063">
    <property type="protein sequence ID" value="AAC38641.1"/>
    <property type="molecule type" value="Genomic_DNA"/>
</dbReference>
<dbReference type="RefSeq" id="WP_005969846.1">
    <property type="nucleotide sequence ID" value="NZ_VBUA01000017.1"/>
</dbReference>
<dbReference type="SMR" id="O85274"/>
<dbReference type="OMA" id="CGGPYWE"/>
<dbReference type="GO" id="GO:0005886">
    <property type="term" value="C:plasma membrane"/>
    <property type="evidence" value="ECO:0007669"/>
    <property type="project" value="UniProtKB-SubCell"/>
</dbReference>
<dbReference type="GO" id="GO:0045271">
    <property type="term" value="C:respiratory chain complex I"/>
    <property type="evidence" value="ECO:0007669"/>
    <property type="project" value="TreeGrafter"/>
</dbReference>
<dbReference type="GO" id="GO:0051539">
    <property type="term" value="F:4 iron, 4 sulfur cluster binding"/>
    <property type="evidence" value="ECO:0007669"/>
    <property type="project" value="UniProtKB-KW"/>
</dbReference>
<dbReference type="GO" id="GO:0005506">
    <property type="term" value="F:iron ion binding"/>
    <property type="evidence" value="ECO:0007669"/>
    <property type="project" value="UniProtKB-UniRule"/>
</dbReference>
<dbReference type="GO" id="GO:0008137">
    <property type="term" value="F:NADH dehydrogenase (ubiquinone) activity"/>
    <property type="evidence" value="ECO:0007669"/>
    <property type="project" value="InterPro"/>
</dbReference>
<dbReference type="GO" id="GO:0050136">
    <property type="term" value="F:NADH:ubiquinone reductase (non-electrogenic) activity"/>
    <property type="evidence" value="ECO:0007669"/>
    <property type="project" value="UniProtKB-UniRule"/>
</dbReference>
<dbReference type="GO" id="GO:0048038">
    <property type="term" value="F:quinone binding"/>
    <property type="evidence" value="ECO:0007669"/>
    <property type="project" value="UniProtKB-KW"/>
</dbReference>
<dbReference type="GO" id="GO:0009060">
    <property type="term" value="P:aerobic respiration"/>
    <property type="evidence" value="ECO:0007669"/>
    <property type="project" value="TreeGrafter"/>
</dbReference>
<dbReference type="GO" id="GO:0015990">
    <property type="term" value="P:electron transport coupled proton transport"/>
    <property type="evidence" value="ECO:0007669"/>
    <property type="project" value="TreeGrafter"/>
</dbReference>
<dbReference type="FunFam" id="3.40.50.12280:FF:000002">
    <property type="entry name" value="NADH-quinone oxidoreductase subunit B"/>
    <property type="match status" value="1"/>
</dbReference>
<dbReference type="Gene3D" id="3.40.50.12280">
    <property type="match status" value="1"/>
</dbReference>
<dbReference type="HAMAP" id="MF_01356">
    <property type="entry name" value="NDH1_NuoB"/>
    <property type="match status" value="1"/>
</dbReference>
<dbReference type="InterPro" id="IPR006137">
    <property type="entry name" value="NADH_UbQ_OxRdtase-like_20kDa"/>
</dbReference>
<dbReference type="InterPro" id="IPR006138">
    <property type="entry name" value="NADH_UQ_OxRdtase_20Kd_su"/>
</dbReference>
<dbReference type="NCBIfam" id="TIGR01957">
    <property type="entry name" value="nuoB_fam"/>
    <property type="match status" value="1"/>
</dbReference>
<dbReference type="NCBIfam" id="NF005012">
    <property type="entry name" value="PRK06411.1"/>
    <property type="match status" value="1"/>
</dbReference>
<dbReference type="PANTHER" id="PTHR11995">
    <property type="entry name" value="NADH DEHYDROGENASE"/>
    <property type="match status" value="1"/>
</dbReference>
<dbReference type="PANTHER" id="PTHR11995:SF14">
    <property type="entry name" value="NADH DEHYDROGENASE [UBIQUINONE] IRON-SULFUR PROTEIN 7, MITOCHONDRIAL"/>
    <property type="match status" value="1"/>
</dbReference>
<dbReference type="Pfam" id="PF01058">
    <property type="entry name" value="Oxidored_q6"/>
    <property type="match status" value="1"/>
</dbReference>
<dbReference type="SUPFAM" id="SSF56770">
    <property type="entry name" value="HydA/Nqo6-like"/>
    <property type="match status" value="1"/>
</dbReference>
<dbReference type="PROSITE" id="PS01150">
    <property type="entry name" value="COMPLEX1_20K"/>
    <property type="match status" value="1"/>
</dbReference>
<comment type="function">
    <text evidence="1">NDH-1 shuttles electrons from NADH, via FMN and iron-sulfur (Fe-S) centers, to quinones in the respiratory chain. Couples the redox reaction to proton translocation (for every two electrons transferred, four hydrogen ions are translocated across the cytoplasmic membrane), and thus conserves the redox energy in a proton gradient (By similarity).</text>
</comment>
<comment type="catalytic activity">
    <reaction evidence="2">
        <text>a quinone + NADH + 5 H(+)(in) = a quinol + NAD(+) + 4 H(+)(out)</text>
        <dbReference type="Rhea" id="RHEA:57888"/>
        <dbReference type="ChEBI" id="CHEBI:15378"/>
        <dbReference type="ChEBI" id="CHEBI:24646"/>
        <dbReference type="ChEBI" id="CHEBI:57540"/>
        <dbReference type="ChEBI" id="CHEBI:57945"/>
        <dbReference type="ChEBI" id="CHEBI:132124"/>
    </reaction>
</comment>
<comment type="cofactor">
    <cofactor evidence="2">
        <name>[4Fe-4S] cluster</name>
        <dbReference type="ChEBI" id="CHEBI:49883"/>
    </cofactor>
    <text evidence="2">Binds 1 [4Fe-4S] cluster.</text>
</comment>
<comment type="subunit">
    <text evidence="2">NDH-1 is composed of 13 different subunits. Subunits NuoB, CD, E, F, and G constitute the peripheral sector of the complex.</text>
</comment>
<comment type="subcellular location">
    <subcellularLocation>
        <location evidence="2">Cell inner membrane</location>
        <topology evidence="2">Peripheral membrane protein</topology>
        <orientation evidence="2">Cytoplasmic side</orientation>
    </subcellularLocation>
</comment>
<comment type="similarity">
    <text evidence="2">Belongs to the complex I 20 kDa subunit family.</text>
</comment>